<organism>
    <name type="scientific">Streptococcus pneumoniae (strain CGSP14)</name>
    <dbReference type="NCBI Taxonomy" id="516950"/>
    <lineage>
        <taxon>Bacteria</taxon>
        <taxon>Bacillati</taxon>
        <taxon>Bacillota</taxon>
        <taxon>Bacilli</taxon>
        <taxon>Lactobacillales</taxon>
        <taxon>Streptococcaceae</taxon>
        <taxon>Streptococcus</taxon>
    </lineage>
</organism>
<reference key="1">
    <citation type="journal article" date="2009" name="BMC Genomics">
        <title>Genome evolution driven by host adaptations results in a more virulent and antimicrobial-resistant Streptococcus pneumoniae serotype 14.</title>
        <authorList>
            <person name="Ding F."/>
            <person name="Tang P."/>
            <person name="Hsu M.-H."/>
            <person name="Cui P."/>
            <person name="Hu S."/>
            <person name="Yu J."/>
            <person name="Chiu C.-H."/>
        </authorList>
    </citation>
    <scope>NUCLEOTIDE SEQUENCE [LARGE SCALE GENOMIC DNA]</scope>
    <source>
        <strain>CGSP14</strain>
    </source>
</reference>
<protein>
    <recommendedName>
        <fullName evidence="1">Holliday junction branch migration complex subunit RuvA</fullName>
    </recommendedName>
</protein>
<comment type="function">
    <text evidence="1">The RuvA-RuvB-RuvC complex processes Holliday junction (HJ) DNA during genetic recombination and DNA repair, while the RuvA-RuvB complex plays an important role in the rescue of blocked DNA replication forks via replication fork reversal (RFR). RuvA specifically binds to HJ cruciform DNA, conferring on it an open structure. The RuvB hexamer acts as an ATP-dependent pump, pulling dsDNA into and through the RuvAB complex. HJ branch migration allows RuvC to scan DNA until it finds its consensus sequence, where it cleaves and resolves the cruciform DNA.</text>
</comment>
<comment type="subunit">
    <text evidence="1">Homotetramer. Forms an RuvA(8)-RuvB(12)-Holliday junction (HJ) complex. HJ DNA is sandwiched between 2 RuvA tetramers; dsDNA enters through RuvA and exits via RuvB. An RuvB hexamer assembles on each DNA strand where it exits the tetramer. Each RuvB hexamer is contacted by two RuvA subunits (via domain III) on 2 adjacent RuvB subunits; this complex drives branch migration. In the full resolvosome a probable DNA-RuvA(4)-RuvB(12)-RuvC(2) complex forms which resolves the HJ.</text>
</comment>
<comment type="subcellular location">
    <subcellularLocation>
        <location evidence="1">Cytoplasm</location>
    </subcellularLocation>
</comment>
<comment type="domain">
    <text evidence="1">Has three domains with a flexible linker between the domains II and III and assumes an 'L' shape. Domain III is highly mobile and contacts RuvB.</text>
</comment>
<comment type="similarity">
    <text evidence="1">Belongs to the RuvA family.</text>
</comment>
<accession>B2IS15</accession>
<proteinExistence type="inferred from homology"/>
<keyword id="KW-0963">Cytoplasm</keyword>
<keyword id="KW-0227">DNA damage</keyword>
<keyword id="KW-0233">DNA recombination</keyword>
<keyword id="KW-0234">DNA repair</keyword>
<keyword id="KW-0238">DNA-binding</keyword>
<evidence type="ECO:0000255" key="1">
    <source>
        <dbReference type="HAMAP-Rule" id="MF_00031"/>
    </source>
</evidence>
<dbReference type="EMBL" id="CP001033">
    <property type="protein sequence ID" value="ACB89445.1"/>
    <property type="molecule type" value="Genomic_DNA"/>
</dbReference>
<dbReference type="RefSeq" id="WP_000271489.1">
    <property type="nucleotide sequence ID" value="NC_010582.1"/>
</dbReference>
<dbReference type="SMR" id="B2IS15"/>
<dbReference type="KEGG" id="spw:SPCG_0193"/>
<dbReference type="HOGENOM" id="CLU_087936_1_0_9"/>
<dbReference type="GO" id="GO:0005737">
    <property type="term" value="C:cytoplasm"/>
    <property type="evidence" value="ECO:0007669"/>
    <property type="project" value="UniProtKB-SubCell"/>
</dbReference>
<dbReference type="GO" id="GO:0009379">
    <property type="term" value="C:Holliday junction helicase complex"/>
    <property type="evidence" value="ECO:0007669"/>
    <property type="project" value="InterPro"/>
</dbReference>
<dbReference type="GO" id="GO:0048476">
    <property type="term" value="C:Holliday junction resolvase complex"/>
    <property type="evidence" value="ECO:0007669"/>
    <property type="project" value="UniProtKB-UniRule"/>
</dbReference>
<dbReference type="GO" id="GO:0005524">
    <property type="term" value="F:ATP binding"/>
    <property type="evidence" value="ECO:0007669"/>
    <property type="project" value="InterPro"/>
</dbReference>
<dbReference type="GO" id="GO:0000400">
    <property type="term" value="F:four-way junction DNA binding"/>
    <property type="evidence" value="ECO:0007669"/>
    <property type="project" value="UniProtKB-UniRule"/>
</dbReference>
<dbReference type="GO" id="GO:0009378">
    <property type="term" value="F:four-way junction helicase activity"/>
    <property type="evidence" value="ECO:0007669"/>
    <property type="project" value="InterPro"/>
</dbReference>
<dbReference type="GO" id="GO:0006310">
    <property type="term" value="P:DNA recombination"/>
    <property type="evidence" value="ECO:0007669"/>
    <property type="project" value="UniProtKB-UniRule"/>
</dbReference>
<dbReference type="GO" id="GO:0006281">
    <property type="term" value="P:DNA repair"/>
    <property type="evidence" value="ECO:0007669"/>
    <property type="project" value="UniProtKB-UniRule"/>
</dbReference>
<dbReference type="CDD" id="cd14332">
    <property type="entry name" value="UBA_RuvA_C"/>
    <property type="match status" value="1"/>
</dbReference>
<dbReference type="Gene3D" id="1.10.150.20">
    <property type="entry name" value="5' to 3' exonuclease, C-terminal subdomain"/>
    <property type="match status" value="1"/>
</dbReference>
<dbReference type="Gene3D" id="1.10.8.10">
    <property type="entry name" value="DNA helicase RuvA subunit, C-terminal domain"/>
    <property type="match status" value="1"/>
</dbReference>
<dbReference type="Gene3D" id="2.40.50.140">
    <property type="entry name" value="Nucleic acid-binding proteins"/>
    <property type="match status" value="1"/>
</dbReference>
<dbReference type="HAMAP" id="MF_00031">
    <property type="entry name" value="DNA_HJ_migration_RuvA"/>
    <property type="match status" value="1"/>
</dbReference>
<dbReference type="InterPro" id="IPR013849">
    <property type="entry name" value="DNA_helicase_Holl-junc_RuvA_I"/>
</dbReference>
<dbReference type="InterPro" id="IPR003583">
    <property type="entry name" value="Hlx-hairpin-Hlx_DNA-bd_motif"/>
</dbReference>
<dbReference type="InterPro" id="IPR012340">
    <property type="entry name" value="NA-bd_OB-fold"/>
</dbReference>
<dbReference type="InterPro" id="IPR000085">
    <property type="entry name" value="RuvA"/>
</dbReference>
<dbReference type="InterPro" id="IPR010994">
    <property type="entry name" value="RuvA_2-like"/>
</dbReference>
<dbReference type="InterPro" id="IPR011114">
    <property type="entry name" value="RuvA_C"/>
</dbReference>
<dbReference type="InterPro" id="IPR036267">
    <property type="entry name" value="RuvA_C_sf"/>
</dbReference>
<dbReference type="NCBIfam" id="TIGR00084">
    <property type="entry name" value="ruvA"/>
    <property type="match status" value="1"/>
</dbReference>
<dbReference type="Pfam" id="PF14520">
    <property type="entry name" value="HHH_5"/>
    <property type="match status" value="1"/>
</dbReference>
<dbReference type="Pfam" id="PF07499">
    <property type="entry name" value="RuvA_C"/>
    <property type="match status" value="1"/>
</dbReference>
<dbReference type="Pfam" id="PF01330">
    <property type="entry name" value="RuvA_N"/>
    <property type="match status" value="1"/>
</dbReference>
<dbReference type="SMART" id="SM00278">
    <property type="entry name" value="HhH1"/>
    <property type="match status" value="2"/>
</dbReference>
<dbReference type="SUPFAM" id="SSF46929">
    <property type="entry name" value="DNA helicase RuvA subunit, C-terminal domain"/>
    <property type="match status" value="1"/>
</dbReference>
<dbReference type="SUPFAM" id="SSF50249">
    <property type="entry name" value="Nucleic acid-binding proteins"/>
    <property type="match status" value="1"/>
</dbReference>
<dbReference type="SUPFAM" id="SSF47781">
    <property type="entry name" value="RuvA domain 2-like"/>
    <property type="match status" value="1"/>
</dbReference>
<name>RUVA_STRPS</name>
<gene>
    <name evidence="1" type="primary">ruvA</name>
    <name type="ordered locus">SPCG_0193</name>
</gene>
<sequence>MYAYLKGIITKITAKYIVLETNGIGYILHVANPYAYSGQVNQEAQIYVHQVVREDAHLLYGFRSEDEKKLFLSLISVSGIGPVSALAIIAADDNAGLVQAIETKNITYLTKFPKIGKKTAQQMVLDLEGKVVVAGDGLPAKVAVQASAENQELEEAMEAMLALGYKATELKKIKKFFEGTTDTAENYIKSALKMLVK</sequence>
<feature type="chain" id="PRO_1000090377" description="Holliday junction branch migration complex subunit RuvA">
    <location>
        <begin position="1"/>
        <end position="197"/>
    </location>
</feature>
<feature type="region of interest" description="Domain I" evidence="1">
    <location>
        <begin position="1"/>
        <end position="63"/>
    </location>
</feature>
<feature type="region of interest" description="Domain II" evidence="1">
    <location>
        <begin position="64"/>
        <end position="142"/>
    </location>
</feature>
<feature type="region of interest" description="Flexible linker" evidence="1">
    <location>
        <begin position="143"/>
        <end position="147"/>
    </location>
</feature>
<feature type="region of interest" description="Domain III" evidence="1">
    <location>
        <begin position="148"/>
        <end position="197"/>
    </location>
</feature>